<dbReference type="EMBL" id="FM180568">
    <property type="protein sequence ID" value="CAS09293.1"/>
    <property type="molecule type" value="Genomic_DNA"/>
</dbReference>
<dbReference type="RefSeq" id="WP_000190985.1">
    <property type="nucleotide sequence ID" value="NC_011601.1"/>
</dbReference>
<dbReference type="SMR" id="B7URZ9"/>
<dbReference type="KEGG" id="ecg:E2348C_1745"/>
<dbReference type="HOGENOM" id="CLU_037628_6_2_6"/>
<dbReference type="UniPathway" id="UPA00488"/>
<dbReference type="Proteomes" id="UP000008205">
    <property type="component" value="Chromosome"/>
</dbReference>
<dbReference type="GO" id="GO:0003700">
    <property type="term" value="F:DNA-binding transcription factor activity"/>
    <property type="evidence" value="ECO:0007669"/>
    <property type="project" value="TreeGrafter"/>
</dbReference>
<dbReference type="GO" id="GO:0000976">
    <property type="term" value="F:transcription cis-regulatory region binding"/>
    <property type="evidence" value="ECO:0007669"/>
    <property type="project" value="TreeGrafter"/>
</dbReference>
<dbReference type="GO" id="GO:0045892">
    <property type="term" value="P:negative regulation of DNA-templated transcription"/>
    <property type="evidence" value="ECO:0007669"/>
    <property type="project" value="UniProtKB-UniRule"/>
</dbReference>
<dbReference type="GO" id="GO:0006164">
    <property type="term" value="P:purine nucleotide biosynthetic process"/>
    <property type="evidence" value="ECO:0007669"/>
    <property type="project" value="UniProtKB-UniPathway"/>
</dbReference>
<dbReference type="CDD" id="cd01392">
    <property type="entry name" value="HTH_LacI"/>
    <property type="match status" value="1"/>
</dbReference>
<dbReference type="CDD" id="cd06275">
    <property type="entry name" value="PBP1_PurR"/>
    <property type="match status" value="1"/>
</dbReference>
<dbReference type="FunFam" id="1.10.260.40:FF:000002">
    <property type="entry name" value="HTH-type transcriptional repressor PurR"/>
    <property type="match status" value="1"/>
</dbReference>
<dbReference type="FunFam" id="3.40.50.2300:FF:000045">
    <property type="entry name" value="HTH-type transcriptional repressor PurR"/>
    <property type="match status" value="1"/>
</dbReference>
<dbReference type="Gene3D" id="3.40.50.2300">
    <property type="match status" value="2"/>
</dbReference>
<dbReference type="Gene3D" id="1.10.260.40">
    <property type="entry name" value="lambda repressor-like DNA-binding domains"/>
    <property type="match status" value="1"/>
</dbReference>
<dbReference type="HAMAP" id="MF_01277">
    <property type="entry name" value="HTH_type_PurR"/>
    <property type="match status" value="1"/>
</dbReference>
<dbReference type="InterPro" id="IPR000843">
    <property type="entry name" value="HTH_LacI"/>
</dbReference>
<dbReference type="InterPro" id="IPR046335">
    <property type="entry name" value="LacI/GalR-like_sensor"/>
</dbReference>
<dbReference type="InterPro" id="IPR010982">
    <property type="entry name" value="Lambda_DNA-bd_dom_sf"/>
</dbReference>
<dbReference type="InterPro" id="IPR028082">
    <property type="entry name" value="Peripla_BP_I"/>
</dbReference>
<dbReference type="InterPro" id="IPR023588">
    <property type="entry name" value="Tscrpt_reg_HTH_PurR"/>
</dbReference>
<dbReference type="NCBIfam" id="NF007979">
    <property type="entry name" value="PRK10703.1"/>
    <property type="match status" value="1"/>
</dbReference>
<dbReference type="PANTHER" id="PTHR30146:SF148">
    <property type="entry name" value="HTH-TYPE TRANSCRIPTIONAL REPRESSOR PURR-RELATED"/>
    <property type="match status" value="1"/>
</dbReference>
<dbReference type="PANTHER" id="PTHR30146">
    <property type="entry name" value="LACI-RELATED TRANSCRIPTIONAL REPRESSOR"/>
    <property type="match status" value="1"/>
</dbReference>
<dbReference type="Pfam" id="PF00356">
    <property type="entry name" value="LacI"/>
    <property type="match status" value="1"/>
</dbReference>
<dbReference type="Pfam" id="PF13377">
    <property type="entry name" value="Peripla_BP_3"/>
    <property type="match status" value="1"/>
</dbReference>
<dbReference type="PRINTS" id="PR00036">
    <property type="entry name" value="HTHLACI"/>
</dbReference>
<dbReference type="SMART" id="SM00354">
    <property type="entry name" value="HTH_LACI"/>
    <property type="match status" value="1"/>
</dbReference>
<dbReference type="SUPFAM" id="SSF47413">
    <property type="entry name" value="lambda repressor-like DNA-binding domains"/>
    <property type="match status" value="1"/>
</dbReference>
<dbReference type="SUPFAM" id="SSF53822">
    <property type="entry name" value="Periplasmic binding protein-like I"/>
    <property type="match status" value="1"/>
</dbReference>
<dbReference type="PROSITE" id="PS00356">
    <property type="entry name" value="HTH_LACI_1"/>
    <property type="match status" value="1"/>
</dbReference>
<dbReference type="PROSITE" id="PS50932">
    <property type="entry name" value="HTH_LACI_2"/>
    <property type="match status" value="1"/>
</dbReference>
<proteinExistence type="inferred from homology"/>
<comment type="function">
    <text evidence="1">Is the main repressor of the genes involved in the de novo synthesis of purine nucleotides, regulating purB, purC, purEK, purF, purHD, purL, purMN and guaBA expression. PurR is allosterically activated to bind its cognate DNA by binding the purine corepressors, hypoxanthine or guanine, thereby effecting transcription repression.</text>
</comment>
<comment type="pathway">
    <text>Purine metabolism; purine nucleotide biosynthesis [regulation].</text>
</comment>
<comment type="subunit">
    <text evidence="1">Homodimer.</text>
</comment>
<comment type="domain">
    <text evidence="1">Consists of two structural and functional domains: an N-terminal DNA-binding domain, approximately the first 60 residues, and a larger C-terminal domain, approximately 280 residues, which imparts the function of corepressor binding and oligomerization.</text>
</comment>
<gene>
    <name evidence="1" type="primary">purR</name>
    <name type="ordered locus">E2348C_1745</name>
</gene>
<accession>B7URZ9</accession>
<reference key="1">
    <citation type="journal article" date="2009" name="J. Bacteriol.">
        <title>Complete genome sequence and comparative genome analysis of enteropathogenic Escherichia coli O127:H6 strain E2348/69.</title>
        <authorList>
            <person name="Iguchi A."/>
            <person name="Thomson N.R."/>
            <person name="Ogura Y."/>
            <person name="Saunders D."/>
            <person name="Ooka T."/>
            <person name="Henderson I.R."/>
            <person name="Harris D."/>
            <person name="Asadulghani M."/>
            <person name="Kurokawa K."/>
            <person name="Dean P."/>
            <person name="Kenny B."/>
            <person name="Quail M.A."/>
            <person name="Thurston S."/>
            <person name="Dougan G."/>
            <person name="Hayashi T."/>
            <person name="Parkhill J."/>
            <person name="Frankel G."/>
        </authorList>
    </citation>
    <scope>NUCLEOTIDE SEQUENCE [LARGE SCALE GENOMIC DNA]</scope>
    <source>
        <strain>E2348/69 / EPEC</strain>
    </source>
</reference>
<sequence>MATIKDVAKRANVSTTTVSHVINKTRFVAEETRNAVWAAIKELHYSPSAVARSLKVNHTKSIGLLATSSEAAYFAEIIEAVEKNCFQKGYTLILGNAWNNLEKQRAYLSMMAQKRVDGLLVMCSEYPEPLLAMLEEYRHIPMVVMDWGEAKADFTDAVIDNAFEGGYMAGRYLIERGHREIGVIPGPLERNTGAGRLAGFMKAMEEAMIKVPESWIVQGDFEPESGYRAMQQILSQSHRPTAVFCGGDIMAMGALCAADEMGLRVPQDVSLIGYDNVRNARYFTPALTTIHQPKDSLGETAFNMLLDRIVNKREEPQSIEVHPRLIERRSVADGPFRDYRR</sequence>
<feature type="chain" id="PRO_1000165213" description="HTH-type transcriptional repressor PurR">
    <location>
        <begin position="1"/>
        <end position="341"/>
    </location>
</feature>
<feature type="domain" description="HTH lacI-type" evidence="1">
    <location>
        <begin position="2"/>
        <end position="56"/>
    </location>
</feature>
<feature type="DNA-binding region" description="H-T-H motif" evidence="1">
    <location>
        <begin position="4"/>
        <end position="23"/>
    </location>
</feature>
<feature type="DNA-binding region" evidence="1">
    <location>
        <begin position="48"/>
        <end position="56"/>
    </location>
</feature>
<feature type="binding site" evidence="1">
    <location>
        <position position="73"/>
    </location>
    <ligand>
        <name>hypoxanthine</name>
        <dbReference type="ChEBI" id="CHEBI:17368"/>
    </ligand>
</feature>
<feature type="binding site" evidence="1">
    <location>
        <position position="190"/>
    </location>
    <ligand>
        <name>hypoxanthine</name>
        <dbReference type="ChEBI" id="CHEBI:17368"/>
    </ligand>
</feature>
<feature type="binding site" evidence="1">
    <location>
        <position position="192"/>
    </location>
    <ligand>
        <name>hypoxanthine</name>
        <dbReference type="ChEBI" id="CHEBI:17368"/>
    </ligand>
</feature>
<feature type="binding site" evidence="1">
    <location>
        <position position="221"/>
    </location>
    <ligand>
        <name>hypoxanthine</name>
        <dbReference type="ChEBI" id="CHEBI:17368"/>
    </ligand>
</feature>
<feature type="binding site" evidence="1">
    <location>
        <position position="275"/>
    </location>
    <ligand>
        <name>hypoxanthine</name>
        <dbReference type="ChEBI" id="CHEBI:17368"/>
    </ligand>
</feature>
<protein>
    <recommendedName>
        <fullName evidence="1">HTH-type transcriptional repressor PurR</fullName>
    </recommendedName>
    <alternativeName>
        <fullName evidence="1">Pur regulon repressor</fullName>
    </alternativeName>
    <alternativeName>
        <fullName evidence="1">Purine nucleotide synthesis repressor</fullName>
    </alternativeName>
</protein>
<keyword id="KW-0238">DNA-binding</keyword>
<keyword id="KW-0658">Purine biosynthesis</keyword>
<keyword id="KW-1185">Reference proteome</keyword>
<keyword id="KW-0678">Repressor</keyword>
<keyword id="KW-0804">Transcription</keyword>
<keyword id="KW-0805">Transcription regulation</keyword>
<evidence type="ECO:0000255" key="1">
    <source>
        <dbReference type="HAMAP-Rule" id="MF_01277"/>
    </source>
</evidence>
<name>PURR_ECO27</name>
<organism>
    <name type="scientific">Escherichia coli O127:H6 (strain E2348/69 / EPEC)</name>
    <dbReference type="NCBI Taxonomy" id="574521"/>
    <lineage>
        <taxon>Bacteria</taxon>
        <taxon>Pseudomonadati</taxon>
        <taxon>Pseudomonadota</taxon>
        <taxon>Gammaproteobacteria</taxon>
        <taxon>Enterobacterales</taxon>
        <taxon>Enterobacteriaceae</taxon>
        <taxon>Escherichia</taxon>
    </lineage>
</organism>